<proteinExistence type="inferred from homology"/>
<comment type="catalytic activity">
    <reaction evidence="1">
        <text>tRNA(Asn) + L-asparagine + ATP = L-asparaginyl-tRNA(Asn) + AMP + diphosphate + H(+)</text>
        <dbReference type="Rhea" id="RHEA:11180"/>
        <dbReference type="Rhea" id="RHEA-COMP:9659"/>
        <dbReference type="Rhea" id="RHEA-COMP:9674"/>
        <dbReference type="ChEBI" id="CHEBI:15378"/>
        <dbReference type="ChEBI" id="CHEBI:30616"/>
        <dbReference type="ChEBI" id="CHEBI:33019"/>
        <dbReference type="ChEBI" id="CHEBI:58048"/>
        <dbReference type="ChEBI" id="CHEBI:78442"/>
        <dbReference type="ChEBI" id="CHEBI:78515"/>
        <dbReference type="ChEBI" id="CHEBI:456215"/>
        <dbReference type="EC" id="6.1.1.22"/>
    </reaction>
</comment>
<comment type="subunit">
    <text evidence="1">Homodimer.</text>
</comment>
<comment type="subcellular location">
    <subcellularLocation>
        <location evidence="1">Cytoplasm</location>
    </subcellularLocation>
</comment>
<comment type="similarity">
    <text evidence="1">Belongs to the class-II aminoacyl-tRNA synthetase family.</text>
</comment>
<organism>
    <name type="scientific">Shewanella sp. (strain MR-7)</name>
    <dbReference type="NCBI Taxonomy" id="60481"/>
    <lineage>
        <taxon>Bacteria</taxon>
        <taxon>Pseudomonadati</taxon>
        <taxon>Pseudomonadota</taxon>
        <taxon>Gammaproteobacteria</taxon>
        <taxon>Alteromonadales</taxon>
        <taxon>Shewanellaceae</taxon>
        <taxon>Shewanella</taxon>
    </lineage>
</organism>
<evidence type="ECO:0000255" key="1">
    <source>
        <dbReference type="HAMAP-Rule" id="MF_00534"/>
    </source>
</evidence>
<feature type="chain" id="PRO_1000051428" description="Asparagine--tRNA ligase">
    <location>
        <begin position="1"/>
        <end position="466"/>
    </location>
</feature>
<accession>Q0HUL3</accession>
<dbReference type="EC" id="6.1.1.22" evidence="1"/>
<dbReference type="EMBL" id="CP000444">
    <property type="protein sequence ID" value="ABI43192.1"/>
    <property type="molecule type" value="Genomic_DNA"/>
</dbReference>
<dbReference type="SMR" id="Q0HUL3"/>
<dbReference type="KEGG" id="shm:Shewmr7_2204"/>
<dbReference type="HOGENOM" id="CLU_004553_2_0_6"/>
<dbReference type="GO" id="GO:0005737">
    <property type="term" value="C:cytoplasm"/>
    <property type="evidence" value="ECO:0007669"/>
    <property type="project" value="UniProtKB-SubCell"/>
</dbReference>
<dbReference type="GO" id="GO:0004816">
    <property type="term" value="F:asparagine-tRNA ligase activity"/>
    <property type="evidence" value="ECO:0007669"/>
    <property type="project" value="UniProtKB-UniRule"/>
</dbReference>
<dbReference type="GO" id="GO:0005524">
    <property type="term" value="F:ATP binding"/>
    <property type="evidence" value="ECO:0007669"/>
    <property type="project" value="UniProtKB-UniRule"/>
</dbReference>
<dbReference type="GO" id="GO:0003676">
    <property type="term" value="F:nucleic acid binding"/>
    <property type="evidence" value="ECO:0007669"/>
    <property type="project" value="InterPro"/>
</dbReference>
<dbReference type="GO" id="GO:0006421">
    <property type="term" value="P:asparaginyl-tRNA aminoacylation"/>
    <property type="evidence" value="ECO:0007669"/>
    <property type="project" value="UniProtKB-UniRule"/>
</dbReference>
<dbReference type="CDD" id="cd00776">
    <property type="entry name" value="AsxRS_core"/>
    <property type="match status" value="1"/>
</dbReference>
<dbReference type="CDD" id="cd04318">
    <property type="entry name" value="EcAsnRS_like_N"/>
    <property type="match status" value="1"/>
</dbReference>
<dbReference type="FunFam" id="3.30.930.10:FF:000016">
    <property type="entry name" value="Asparagine--tRNA ligase"/>
    <property type="match status" value="1"/>
</dbReference>
<dbReference type="Gene3D" id="3.30.930.10">
    <property type="entry name" value="Bira Bifunctional Protein, Domain 2"/>
    <property type="match status" value="1"/>
</dbReference>
<dbReference type="Gene3D" id="2.40.50.140">
    <property type="entry name" value="Nucleic acid-binding proteins"/>
    <property type="match status" value="1"/>
</dbReference>
<dbReference type="HAMAP" id="MF_00534">
    <property type="entry name" value="Asn_tRNA_synth"/>
    <property type="match status" value="1"/>
</dbReference>
<dbReference type="InterPro" id="IPR004364">
    <property type="entry name" value="Aa-tRNA-synt_II"/>
</dbReference>
<dbReference type="InterPro" id="IPR006195">
    <property type="entry name" value="aa-tRNA-synth_II"/>
</dbReference>
<dbReference type="InterPro" id="IPR045864">
    <property type="entry name" value="aa-tRNA-synth_II/BPL/LPL"/>
</dbReference>
<dbReference type="InterPro" id="IPR004522">
    <property type="entry name" value="Asn-tRNA-ligase"/>
</dbReference>
<dbReference type="InterPro" id="IPR002312">
    <property type="entry name" value="Asp/Asn-tRNA-synth_IIb"/>
</dbReference>
<dbReference type="InterPro" id="IPR012340">
    <property type="entry name" value="NA-bd_OB-fold"/>
</dbReference>
<dbReference type="InterPro" id="IPR004365">
    <property type="entry name" value="NA-bd_OB_tRNA"/>
</dbReference>
<dbReference type="NCBIfam" id="TIGR00457">
    <property type="entry name" value="asnS"/>
    <property type="match status" value="1"/>
</dbReference>
<dbReference type="NCBIfam" id="NF003037">
    <property type="entry name" value="PRK03932.1"/>
    <property type="match status" value="1"/>
</dbReference>
<dbReference type="PANTHER" id="PTHR22594:SF34">
    <property type="entry name" value="ASPARAGINE--TRNA LIGASE, MITOCHONDRIAL-RELATED"/>
    <property type="match status" value="1"/>
</dbReference>
<dbReference type="PANTHER" id="PTHR22594">
    <property type="entry name" value="ASPARTYL/LYSYL-TRNA SYNTHETASE"/>
    <property type="match status" value="1"/>
</dbReference>
<dbReference type="Pfam" id="PF00152">
    <property type="entry name" value="tRNA-synt_2"/>
    <property type="match status" value="1"/>
</dbReference>
<dbReference type="Pfam" id="PF01336">
    <property type="entry name" value="tRNA_anti-codon"/>
    <property type="match status" value="1"/>
</dbReference>
<dbReference type="PRINTS" id="PR01042">
    <property type="entry name" value="TRNASYNTHASP"/>
</dbReference>
<dbReference type="SUPFAM" id="SSF55681">
    <property type="entry name" value="Class II aaRS and biotin synthetases"/>
    <property type="match status" value="1"/>
</dbReference>
<dbReference type="SUPFAM" id="SSF50249">
    <property type="entry name" value="Nucleic acid-binding proteins"/>
    <property type="match status" value="1"/>
</dbReference>
<dbReference type="PROSITE" id="PS50862">
    <property type="entry name" value="AA_TRNA_LIGASE_II"/>
    <property type="match status" value="1"/>
</dbReference>
<protein>
    <recommendedName>
        <fullName evidence="1">Asparagine--tRNA ligase</fullName>
        <ecNumber evidence="1">6.1.1.22</ecNumber>
    </recommendedName>
    <alternativeName>
        <fullName evidence="1">Asparaginyl-tRNA synthetase</fullName>
        <shortName evidence="1">AsnRS</shortName>
    </alternativeName>
</protein>
<name>SYN_SHESR</name>
<keyword id="KW-0030">Aminoacyl-tRNA synthetase</keyword>
<keyword id="KW-0067">ATP-binding</keyword>
<keyword id="KW-0963">Cytoplasm</keyword>
<keyword id="KW-0436">Ligase</keyword>
<keyword id="KW-0547">Nucleotide-binding</keyword>
<keyword id="KW-0648">Protein biosynthesis</keyword>
<gene>
    <name evidence="1" type="primary">asnS</name>
    <name type="ordered locus">Shewmr7_2204</name>
</gene>
<reference key="1">
    <citation type="submission" date="2006-08" db="EMBL/GenBank/DDBJ databases">
        <title>Complete sequence of chromosome 1 of Shewanella sp. MR-7.</title>
        <authorList>
            <person name="Copeland A."/>
            <person name="Lucas S."/>
            <person name="Lapidus A."/>
            <person name="Barry K."/>
            <person name="Detter J.C."/>
            <person name="Glavina del Rio T."/>
            <person name="Hammon N."/>
            <person name="Israni S."/>
            <person name="Dalin E."/>
            <person name="Tice H."/>
            <person name="Pitluck S."/>
            <person name="Kiss H."/>
            <person name="Brettin T."/>
            <person name="Bruce D."/>
            <person name="Han C."/>
            <person name="Tapia R."/>
            <person name="Gilna P."/>
            <person name="Schmutz J."/>
            <person name="Larimer F."/>
            <person name="Land M."/>
            <person name="Hauser L."/>
            <person name="Kyrpides N."/>
            <person name="Mikhailova N."/>
            <person name="Nealson K."/>
            <person name="Konstantinidis K."/>
            <person name="Klappenbach J."/>
            <person name="Tiedje J."/>
            <person name="Richardson P."/>
        </authorList>
    </citation>
    <scope>NUCLEOTIDE SEQUENCE [LARGE SCALE GENOMIC DNA]</scope>
    <source>
        <strain>MR-7</strain>
    </source>
</reference>
<sequence>MSIASVASVFKGEHAVGSTVTVRGWVRTRRDSKAGISFLAVYDGSCFNPIQGVVPSSLENYDNEVLKLTAGCSVIVTGEIVESPGAGQAYELQVTHVEVTGWVEDPDTYPMAAKRHSIEHLRELAHLRPRTNIIGAVARVRNCLSQAIHRFYHENGFVWVSTPLITASDCEGAGEMFRVSTLDMENLPRTSDGKVDYDKDFFGKEAFLTVSGQLNGETYACALSKIYTFGPTFRAENSNTSRHLAEFWMVEPEVAFATLSDIASLAEGMLKYAFDAVLAERMDDLQFFAQHVDKTVIERLQSFVSSDFAQVDYTDAVEILQKCGREFEFPVSWGIDLSSEHERYLAEEHFKAPVVVKNYPKDIKAFYMRLNEDGKTVAAMDVLAPGIGEIIGGSQREERLDVLDMRLEEMDLNKEDYWWYRDLRRYGTVPHAGFGLGFERLVSYVTGVSNIRDVIPFPRAPRTANF</sequence>